<protein>
    <recommendedName>
        <fullName>Cytochrome c</fullName>
    </recommendedName>
</protein>
<feature type="initiator methionine" description="Removed" evidence="1">
    <location>
        <position position="1"/>
    </location>
</feature>
<feature type="chain" id="PRO_0000266014" description="Cytochrome c">
    <location>
        <begin position="2"/>
        <end position="104"/>
    </location>
</feature>
<feature type="binding site" description="covalent" evidence="2">
    <location>
        <position position="15"/>
    </location>
    <ligand>
        <name>heme c</name>
        <dbReference type="ChEBI" id="CHEBI:61717"/>
    </ligand>
</feature>
<feature type="binding site" description="covalent" evidence="2">
    <location>
        <position position="18"/>
    </location>
    <ligand>
        <name>heme c</name>
        <dbReference type="ChEBI" id="CHEBI:61717"/>
    </ligand>
</feature>
<feature type="binding site" description="axial binding residue" evidence="2">
    <location>
        <position position="19"/>
    </location>
    <ligand>
        <name>heme c</name>
        <dbReference type="ChEBI" id="CHEBI:61717"/>
    </ligand>
    <ligandPart>
        <name>Fe</name>
        <dbReference type="ChEBI" id="CHEBI:18248"/>
    </ligandPart>
</feature>
<feature type="binding site" description="axial binding residue" evidence="2">
    <location>
        <position position="81"/>
    </location>
    <ligand>
        <name>heme c</name>
        <dbReference type="ChEBI" id="CHEBI:61717"/>
    </ligand>
    <ligandPart>
        <name>Fe</name>
        <dbReference type="ChEBI" id="CHEBI:18248"/>
    </ligandPart>
</feature>
<feature type="modified residue" description="N-acetylglycine" evidence="1">
    <location>
        <position position="2"/>
    </location>
</feature>
<gene>
    <name type="primary">cyc</name>
    <name type="ORF">GSTENG00018747001</name>
</gene>
<accession>Q4SG99</accession>
<evidence type="ECO:0000250" key="1"/>
<evidence type="ECO:0000255" key="2">
    <source>
        <dbReference type="PROSITE-ProRule" id="PRU00433"/>
    </source>
</evidence>
<evidence type="ECO:0000305" key="3"/>
<comment type="function">
    <text evidence="1">Electron carrier protein. The oxidized form of the cytochrome c heme group can accept an electron from the heme group of the cytochrome c1 subunit of cytochrome reductase. Cytochrome c then transfers this electron to the cytochrome oxidase complex, the final protein carrier in the mitochondrial electron-transport chain (By similarity).</text>
</comment>
<comment type="subcellular location">
    <subcellularLocation>
        <location evidence="1">Mitochondrion intermembrane space</location>
    </subcellularLocation>
    <text evidence="1">Loosely associated with the inner membrane.</text>
</comment>
<comment type="PTM">
    <text evidence="1">Binds 1 heme c group covalently per subunit.</text>
</comment>
<comment type="similarity">
    <text evidence="3">Belongs to the cytochrome c family.</text>
</comment>
<comment type="online information" name="Protein Spotlight">
    <link uri="https://www.proteinspotlight.org/back_issues/076"/>
    <text>Life shuttle - Issue 76 of November 2006</text>
</comment>
<keyword id="KW-0007">Acetylation</keyword>
<keyword id="KW-0249">Electron transport</keyword>
<keyword id="KW-0349">Heme</keyword>
<keyword id="KW-0408">Iron</keyword>
<keyword id="KW-0479">Metal-binding</keyword>
<keyword id="KW-0496">Mitochondrion</keyword>
<keyword id="KW-1185">Reference proteome</keyword>
<keyword id="KW-0679">Respiratory chain</keyword>
<keyword id="KW-0813">Transport</keyword>
<sequence length="104" mass="11571">MGDIAKGKKTFVQKCAQCHTVEEGGKHKTGPNLWGLFGRKTGQAEGFSYTDANKSKGIIWNEDTLLEYLENPKKYIPGTKMIFAGIKKKAERQDLIAYLKSSTS</sequence>
<name>CYC_TETNG</name>
<reference key="1">
    <citation type="journal article" date="2004" name="Nature">
        <title>Genome duplication in the teleost fish Tetraodon nigroviridis reveals the early vertebrate proto-karyotype.</title>
        <authorList>
            <person name="Jaillon O."/>
            <person name="Aury J.-M."/>
            <person name="Brunet F."/>
            <person name="Petit J.-L."/>
            <person name="Stange-Thomann N."/>
            <person name="Mauceli E."/>
            <person name="Bouneau L."/>
            <person name="Fischer C."/>
            <person name="Ozouf-Costaz C."/>
            <person name="Bernot A."/>
            <person name="Nicaud S."/>
            <person name="Jaffe D."/>
            <person name="Fisher S."/>
            <person name="Lutfalla G."/>
            <person name="Dossat C."/>
            <person name="Segurens B."/>
            <person name="Dasilva C."/>
            <person name="Salanoubat M."/>
            <person name="Levy M."/>
            <person name="Boudet N."/>
            <person name="Castellano S."/>
            <person name="Anthouard V."/>
            <person name="Jubin C."/>
            <person name="Castelli V."/>
            <person name="Katinka M."/>
            <person name="Vacherie B."/>
            <person name="Biemont C."/>
            <person name="Skalli Z."/>
            <person name="Cattolico L."/>
            <person name="Poulain J."/>
            <person name="De Berardinis V."/>
            <person name="Cruaud C."/>
            <person name="Duprat S."/>
            <person name="Brottier P."/>
            <person name="Coutanceau J.-P."/>
            <person name="Gouzy J."/>
            <person name="Parra G."/>
            <person name="Lardier G."/>
            <person name="Chapple C."/>
            <person name="McKernan K.J."/>
            <person name="McEwan P."/>
            <person name="Bosak S."/>
            <person name="Kellis M."/>
            <person name="Volff J.-N."/>
            <person name="Guigo R."/>
            <person name="Zody M.C."/>
            <person name="Mesirov J."/>
            <person name="Lindblad-Toh K."/>
            <person name="Birren B."/>
            <person name="Nusbaum C."/>
            <person name="Kahn D."/>
            <person name="Robinson-Rechavi M."/>
            <person name="Laudet V."/>
            <person name="Schachter V."/>
            <person name="Quetier F."/>
            <person name="Saurin W."/>
            <person name="Scarpelli C."/>
            <person name="Wincker P."/>
            <person name="Lander E.S."/>
            <person name="Weissenbach J."/>
            <person name="Roest Crollius H."/>
        </authorList>
    </citation>
    <scope>NUCLEOTIDE SEQUENCE [LARGE SCALE GENOMIC DNA]</scope>
</reference>
<dbReference type="EMBL" id="CAAE01014597">
    <property type="protein sequence ID" value="CAG00333.1"/>
    <property type="molecule type" value="Genomic_DNA"/>
</dbReference>
<dbReference type="SMR" id="Q4SG99"/>
<dbReference type="FunCoup" id="Q4SG99">
    <property type="interactions" value="1701"/>
</dbReference>
<dbReference type="STRING" id="99883.ENSTNIP00000012747"/>
<dbReference type="Ensembl" id="ENSTNIT00000012939.1">
    <property type="protein sequence ID" value="ENSTNIP00000012747.1"/>
    <property type="gene ID" value="ENSTNIG00000009858.1"/>
</dbReference>
<dbReference type="KEGG" id="tng:GSTEN00018747G001"/>
<dbReference type="GeneTree" id="ENSGT00940000157883"/>
<dbReference type="HOGENOM" id="CLU_060944_3_0_1"/>
<dbReference type="InParanoid" id="Q4SG99"/>
<dbReference type="OMA" id="ARCKACH"/>
<dbReference type="OrthoDB" id="449280at2759"/>
<dbReference type="TreeFam" id="TF300226"/>
<dbReference type="Proteomes" id="UP000007303">
    <property type="component" value="Unassembled WGS sequence"/>
</dbReference>
<dbReference type="GO" id="GO:0005758">
    <property type="term" value="C:mitochondrial intermembrane space"/>
    <property type="evidence" value="ECO:0007669"/>
    <property type="project" value="UniProtKB-SubCell"/>
</dbReference>
<dbReference type="GO" id="GO:0009055">
    <property type="term" value="F:electron transfer activity"/>
    <property type="evidence" value="ECO:0007669"/>
    <property type="project" value="InterPro"/>
</dbReference>
<dbReference type="GO" id="GO:0020037">
    <property type="term" value="F:heme binding"/>
    <property type="evidence" value="ECO:0007669"/>
    <property type="project" value="InterPro"/>
</dbReference>
<dbReference type="GO" id="GO:0046872">
    <property type="term" value="F:metal ion binding"/>
    <property type="evidence" value="ECO:0007669"/>
    <property type="project" value="UniProtKB-KW"/>
</dbReference>
<dbReference type="FunFam" id="1.10.760.10:FF:000001">
    <property type="entry name" value="Cytochrome c iso-1"/>
    <property type="match status" value="1"/>
</dbReference>
<dbReference type="Gene3D" id="1.10.760.10">
    <property type="entry name" value="Cytochrome c-like domain"/>
    <property type="match status" value="1"/>
</dbReference>
<dbReference type="InterPro" id="IPR009056">
    <property type="entry name" value="Cyt_c-like_dom"/>
</dbReference>
<dbReference type="InterPro" id="IPR036909">
    <property type="entry name" value="Cyt_c-like_dom_sf"/>
</dbReference>
<dbReference type="InterPro" id="IPR002327">
    <property type="entry name" value="Cyt_c_1A/1B"/>
</dbReference>
<dbReference type="PANTHER" id="PTHR11961">
    <property type="entry name" value="CYTOCHROME C"/>
    <property type="match status" value="1"/>
</dbReference>
<dbReference type="Pfam" id="PF00034">
    <property type="entry name" value="Cytochrom_C"/>
    <property type="match status" value="1"/>
</dbReference>
<dbReference type="PRINTS" id="PR00604">
    <property type="entry name" value="CYTCHRMECIAB"/>
</dbReference>
<dbReference type="SUPFAM" id="SSF46626">
    <property type="entry name" value="Cytochrome c"/>
    <property type="match status" value="1"/>
</dbReference>
<dbReference type="PROSITE" id="PS51007">
    <property type="entry name" value="CYTC"/>
    <property type="match status" value="1"/>
</dbReference>
<organism>
    <name type="scientific">Tetraodon nigroviridis</name>
    <name type="common">Spotted green pufferfish</name>
    <name type="synonym">Chelonodon nigroviridis</name>
    <dbReference type="NCBI Taxonomy" id="99883"/>
    <lineage>
        <taxon>Eukaryota</taxon>
        <taxon>Metazoa</taxon>
        <taxon>Chordata</taxon>
        <taxon>Craniata</taxon>
        <taxon>Vertebrata</taxon>
        <taxon>Euteleostomi</taxon>
        <taxon>Actinopterygii</taxon>
        <taxon>Neopterygii</taxon>
        <taxon>Teleostei</taxon>
        <taxon>Neoteleostei</taxon>
        <taxon>Acanthomorphata</taxon>
        <taxon>Eupercaria</taxon>
        <taxon>Tetraodontiformes</taxon>
        <taxon>Tetradontoidea</taxon>
        <taxon>Tetraodontidae</taxon>
        <taxon>Tetraodon</taxon>
    </lineage>
</organism>
<proteinExistence type="inferred from homology"/>